<name>NAT8B_MOUSE</name>
<comment type="function">
    <text evidence="1 5">Endoplasmic reticulum (ER)-membrane-bound lysine N-acetyltransferase catalyzing the N6-acetylation of lysine residues in the lumen of the ER in various proteins, including PROM1 and BACE1, using acetyl-CoA as acetyl donor. Thereby, may regulate apoptosis through the acetylation and the regulation of the expression of PROM1. Acetylates and stabilizes BACE1 immature protein, leading to increased steady-state levels in neurons. By acting on BACE1 expression, may regulate amyloid beta-peptide formation (By similarity). N(6)-lysine acetylation in ER maintains protein homeostasis and regulates reticulophagy (PubMed:33846551).</text>
</comment>
<comment type="catalytic activity">
    <reaction evidence="1">
        <text>L-lysyl-[protein] + acetyl-CoA = N(6)-acetyl-L-lysyl-[protein] + CoA + H(+)</text>
        <dbReference type="Rhea" id="RHEA:45948"/>
        <dbReference type="Rhea" id="RHEA-COMP:9752"/>
        <dbReference type="Rhea" id="RHEA-COMP:10731"/>
        <dbReference type="ChEBI" id="CHEBI:15378"/>
        <dbReference type="ChEBI" id="CHEBI:29969"/>
        <dbReference type="ChEBI" id="CHEBI:57287"/>
        <dbReference type="ChEBI" id="CHEBI:57288"/>
        <dbReference type="ChEBI" id="CHEBI:61930"/>
    </reaction>
    <physiologicalReaction direction="left-to-right" evidence="1">
        <dbReference type="Rhea" id="RHEA:45949"/>
    </physiologicalReaction>
</comment>
<comment type="subcellular location">
    <subcellularLocation>
        <location evidence="1">Endoplasmic reticulum-Golgi intermediate compartment membrane</location>
        <topology evidence="1">Single-pass type II membrane protein</topology>
    </subcellularLocation>
    <subcellularLocation>
        <location evidence="1">Endoplasmic reticulum membrane</location>
        <topology evidence="1">Single-pass type II membrane protein</topology>
    </subcellularLocation>
    <text evidence="1">Enriched in the endoplasmic reticulum-Golgi intermediate compartment.</text>
</comment>
<comment type="tissue specificity">
    <text evidence="4">Expressed in brain (at protein level).</text>
</comment>
<comment type="PTM">
    <text evidence="1">Acetylation on Lys-109 modulates enzymatic activity.</text>
</comment>
<comment type="disruption phenotype">
    <text evidence="5">Nat8b-deficient mice born with Mendelian ratio and do not exhibit any apparent physical abnormalities. However Nat8b-deficient mice display activated reticulophagy and macroautophagy. Disruption of Nat8b ameliorates the proteotoxicity phenotype of a mouse model of Alzheimer's disease.</text>
</comment>
<comment type="similarity">
    <text evidence="7">Belongs to the NAT8 family.</text>
</comment>
<comment type="caution">
    <text evidence="8">Was reported as a possible pseudogene. However an antibody which recognizes both Nat8 and Nat8b detects a product of approximately 27 kDa in brain extracts, which provides some evidence for existence of this protein (PubMed:22267734).</text>
</comment>
<keyword id="KW-0007">Acetylation</keyword>
<keyword id="KW-0012">Acyltransferase</keyword>
<keyword id="KW-0256">Endoplasmic reticulum</keyword>
<keyword id="KW-0472">Membrane</keyword>
<keyword id="KW-1185">Reference proteome</keyword>
<keyword id="KW-0735">Signal-anchor</keyword>
<keyword id="KW-0808">Transferase</keyword>
<keyword id="KW-0812">Transmembrane</keyword>
<keyword id="KW-1133">Transmembrane helix</keyword>
<organism>
    <name type="scientific">Mus musculus</name>
    <name type="common">Mouse</name>
    <dbReference type="NCBI Taxonomy" id="10090"/>
    <lineage>
        <taxon>Eukaryota</taxon>
        <taxon>Metazoa</taxon>
        <taxon>Chordata</taxon>
        <taxon>Craniata</taxon>
        <taxon>Vertebrata</taxon>
        <taxon>Euteleostomi</taxon>
        <taxon>Mammalia</taxon>
        <taxon>Eutheria</taxon>
        <taxon>Euarchontoglires</taxon>
        <taxon>Glires</taxon>
        <taxon>Rodentia</taxon>
        <taxon>Myomorpha</taxon>
        <taxon>Muroidea</taxon>
        <taxon>Muridae</taxon>
        <taxon>Murinae</taxon>
        <taxon>Mus</taxon>
        <taxon>Mus</taxon>
    </lineage>
</organism>
<evidence type="ECO:0000250" key="1">
    <source>
        <dbReference type="UniProtKB" id="Q9UHF3"/>
    </source>
</evidence>
<evidence type="ECO:0000255" key="2"/>
<evidence type="ECO:0000255" key="3">
    <source>
        <dbReference type="PROSITE-ProRule" id="PRU00532"/>
    </source>
</evidence>
<evidence type="ECO:0000269" key="4">
    <source>
    </source>
</evidence>
<evidence type="ECO:0000269" key="5">
    <source>
    </source>
</evidence>
<evidence type="ECO:0000303" key="6">
    <source>
    </source>
</evidence>
<evidence type="ECO:0000305" key="7"/>
<evidence type="ECO:0000305" key="8">
    <source>
    </source>
</evidence>
<evidence type="ECO:0000312" key="9">
    <source>
        <dbReference type="MGI" id="MGI:3644831"/>
    </source>
</evidence>
<sequence>MPRFEAQKSSMVPYHIRQYQDSDHKRVVDVFTTGAEEYIPSTFRHVLRLPRTFLLLLGVPLALVLVSGSWILAVICIFFLLLLLRLLARQPWKEYVAKCLQTYMVDITKSYLNVHGACFWVAESGGQVVGIVAAQPVKDPPLGRKQLQLFRLSVSSQHRGQGIAKALTRTVLQFARDQSYSDVVLETSTLQQGAMTLYLGMGFKKTGQYFKSMFWRLVDICFIQLNYSFPSA</sequence>
<reference key="1">
    <citation type="journal article" date="2009" name="PLoS Biol.">
        <title>Lineage-specific biology revealed by a finished genome assembly of the mouse.</title>
        <authorList>
            <person name="Church D.M."/>
            <person name="Goodstadt L."/>
            <person name="Hillier L.W."/>
            <person name="Zody M.C."/>
            <person name="Goldstein S."/>
            <person name="She X."/>
            <person name="Bult C.J."/>
            <person name="Agarwala R."/>
            <person name="Cherry J.L."/>
            <person name="DiCuccio M."/>
            <person name="Hlavina W."/>
            <person name="Kapustin Y."/>
            <person name="Meric P."/>
            <person name="Maglott D."/>
            <person name="Birtle Z."/>
            <person name="Marques A.C."/>
            <person name="Graves T."/>
            <person name="Zhou S."/>
            <person name="Teague B."/>
            <person name="Potamousis K."/>
            <person name="Churas C."/>
            <person name="Place M."/>
            <person name="Herschleb J."/>
            <person name="Runnheim R."/>
            <person name="Forrest D."/>
            <person name="Amos-Landgraf J."/>
            <person name="Schwartz D.C."/>
            <person name="Cheng Z."/>
            <person name="Lindblad-Toh K."/>
            <person name="Eichler E.E."/>
            <person name="Ponting C.P."/>
        </authorList>
    </citation>
    <scope>NUCLEOTIDE SEQUENCE [LARGE SCALE GENOMIC DNA]</scope>
    <source>
        <strain>C57BL/6J</strain>
    </source>
</reference>
<reference key="2">
    <citation type="journal article" date="2012" name="J. Biol. Chem.">
        <title>Biochemical inhibition of the acetyltransferases ATase1 and ATase2 reduces beta-secretase (BACE1) levels and Abeta generation.</title>
        <authorList>
            <person name="Ding Y."/>
            <person name="Ko M.H."/>
            <person name="Pehar M."/>
            <person name="Kotch F."/>
            <person name="Peters N.R."/>
            <person name="Luo Y."/>
            <person name="Salamat S.M."/>
            <person name="Puglielli L."/>
        </authorList>
    </citation>
    <scope>TISSUE SPECIFICITY</scope>
</reference>
<reference key="3">
    <citation type="journal article" date="2021" name="Commun. Biol.">
        <title>Endoplasmic reticulum acetyltransferases Atase1 and Atase2 differentially regulate reticulophagy, macroautophagy and cellular acetyl-CoA metabolism.</title>
        <authorList>
            <person name="Rigby M.J."/>
            <person name="Lawton A.J."/>
            <person name="Kaur G."/>
            <person name="Banduseela V.C."/>
            <person name="Kamm W.E."/>
            <person name="Lakkaraju A."/>
            <person name="Denu J.M."/>
            <person name="Puglielli L."/>
        </authorList>
    </citation>
    <scope>DISRUPTION PHENOTYPE</scope>
    <scope>FUNCTION</scope>
</reference>
<proteinExistence type="evidence at protein level"/>
<protein>
    <recommendedName>
        <fullName evidence="7">N-acetyltransferase 8B</fullName>
        <ecNumber evidence="1">2.3.1.-</ecNumber>
    </recommendedName>
    <alternativeName>
        <fullName evidence="7">Acetyltransferase 1</fullName>
        <shortName evidence="6">ATase1</shortName>
    </alternativeName>
    <alternativeName>
        <fullName evidence="1">Camello-like protein 2</fullName>
    </alternativeName>
    <alternativeName>
        <fullName>Protein-lysine N6-acetyltransferase 8B</fullName>
    </alternativeName>
</protein>
<accession>E0CYC6</accession>
<dbReference type="EC" id="2.3.1.-" evidence="1"/>
<dbReference type="EMBL" id="AC158679">
    <property type="status" value="NOT_ANNOTATED_CDS"/>
    <property type="molecule type" value="Genomic_DNA"/>
</dbReference>
<dbReference type="SMR" id="E0CYC6"/>
<dbReference type="FunCoup" id="E0CYC6">
    <property type="interactions" value="42"/>
</dbReference>
<dbReference type="jPOST" id="E0CYC6"/>
<dbReference type="PaxDb" id="10090-ENSMUSP00000124315"/>
<dbReference type="PeptideAtlas" id="E0CYC6"/>
<dbReference type="ProteomicsDB" id="287607"/>
<dbReference type="AGR" id="MGI:3644831"/>
<dbReference type="MGI" id="MGI:3644831">
    <property type="gene designation" value="Nat8b-ps"/>
</dbReference>
<dbReference type="eggNOG" id="KOG3139">
    <property type="taxonomic scope" value="Eukaryota"/>
</dbReference>
<dbReference type="InParanoid" id="E0CYC6"/>
<dbReference type="PhylomeDB" id="E0CYC6"/>
<dbReference type="TreeFam" id="TF324687"/>
<dbReference type="ChiTaRS" id="Nat8f2">
    <property type="organism name" value="mouse"/>
</dbReference>
<dbReference type="PRO" id="PR:E0CYC6"/>
<dbReference type="Proteomes" id="UP000000589">
    <property type="component" value="Unplaced"/>
</dbReference>
<dbReference type="RNAct" id="E0CYC6">
    <property type="molecule type" value="protein"/>
</dbReference>
<dbReference type="GO" id="GO:0005789">
    <property type="term" value="C:endoplasmic reticulum membrane"/>
    <property type="evidence" value="ECO:0000250"/>
    <property type="project" value="UniProtKB"/>
</dbReference>
<dbReference type="GO" id="GO:0033116">
    <property type="term" value="C:endoplasmic reticulum-Golgi intermediate compartment membrane"/>
    <property type="evidence" value="ECO:0000250"/>
    <property type="project" value="UniProtKB"/>
</dbReference>
<dbReference type="GO" id="GO:0061733">
    <property type="term" value="F:protein-lysine-acetyltransferase activity"/>
    <property type="evidence" value="ECO:0000250"/>
    <property type="project" value="UniProtKB"/>
</dbReference>
<dbReference type="GO" id="GO:0006084">
    <property type="term" value="P:acetyl-CoA metabolic process"/>
    <property type="evidence" value="ECO:0000315"/>
    <property type="project" value="UniProtKB"/>
</dbReference>
<dbReference type="GO" id="GO:0050435">
    <property type="term" value="P:amyloid-beta metabolic process"/>
    <property type="evidence" value="ECO:0000250"/>
    <property type="project" value="UniProtKB"/>
</dbReference>
<dbReference type="GO" id="GO:0043066">
    <property type="term" value="P:negative regulation of apoptotic process"/>
    <property type="evidence" value="ECO:0000250"/>
    <property type="project" value="UniProtKB"/>
</dbReference>
<dbReference type="GO" id="GO:0018003">
    <property type="term" value="P:peptidyl-lysine N6-acetylation"/>
    <property type="evidence" value="ECO:0000250"/>
    <property type="project" value="UniProtKB"/>
</dbReference>
<dbReference type="GO" id="GO:0010628">
    <property type="term" value="P:positive regulation of gene expression"/>
    <property type="evidence" value="ECO:0000250"/>
    <property type="project" value="UniProtKB"/>
</dbReference>
<dbReference type="GO" id="GO:0016241">
    <property type="term" value="P:regulation of macroautophagy"/>
    <property type="evidence" value="ECO:0000315"/>
    <property type="project" value="UniProtKB"/>
</dbReference>
<dbReference type="GO" id="GO:0140500">
    <property type="term" value="P:regulation of reticulophagy"/>
    <property type="evidence" value="ECO:0000315"/>
    <property type="project" value="UniProtKB"/>
</dbReference>
<dbReference type="CDD" id="cd04301">
    <property type="entry name" value="NAT_SF"/>
    <property type="match status" value="1"/>
</dbReference>
<dbReference type="FunFam" id="3.40.630.30:FF:000118">
    <property type="entry name" value="N-acetyltransferase family 8 member 3"/>
    <property type="match status" value="1"/>
</dbReference>
<dbReference type="Gene3D" id="3.40.630.30">
    <property type="match status" value="1"/>
</dbReference>
<dbReference type="InterPro" id="IPR016181">
    <property type="entry name" value="Acyl_CoA_acyltransferase"/>
</dbReference>
<dbReference type="InterPro" id="IPR000182">
    <property type="entry name" value="GNAT_dom"/>
</dbReference>
<dbReference type="InterPro" id="IPR050769">
    <property type="entry name" value="NAT_camello-type"/>
</dbReference>
<dbReference type="PANTHER" id="PTHR13947">
    <property type="entry name" value="GNAT FAMILY N-ACETYLTRANSFERASE"/>
    <property type="match status" value="1"/>
</dbReference>
<dbReference type="PANTHER" id="PTHR13947:SF53">
    <property type="entry name" value="N-ACETYLTRANSFERASE 8B-RELATED"/>
    <property type="match status" value="1"/>
</dbReference>
<dbReference type="Pfam" id="PF00583">
    <property type="entry name" value="Acetyltransf_1"/>
    <property type="match status" value="1"/>
</dbReference>
<dbReference type="SUPFAM" id="SSF55729">
    <property type="entry name" value="Acyl-CoA N-acyltransferases (Nat)"/>
    <property type="match status" value="1"/>
</dbReference>
<dbReference type="PROSITE" id="PS51186">
    <property type="entry name" value="GNAT"/>
    <property type="match status" value="1"/>
</dbReference>
<feature type="chain" id="PRO_0000416112" description="N-acetyltransferase 8B">
    <location>
        <begin position="1"/>
        <end position="232"/>
    </location>
</feature>
<feature type="topological domain" description="Cytoplasmic" evidence="2">
    <location>
        <begin position="1"/>
        <end position="62"/>
    </location>
</feature>
<feature type="transmembrane region" description="Helical; Signal-anchor for type II membrane protein" evidence="2">
    <location>
        <begin position="63"/>
        <end position="83"/>
    </location>
</feature>
<feature type="topological domain" description="Lumenal" evidence="2">
    <location>
        <begin position="84"/>
        <end position="232"/>
    </location>
</feature>
<feature type="domain" description="N-acetyltransferase" evidence="3">
    <location>
        <begin position="79"/>
        <end position="224"/>
    </location>
</feature>
<feature type="modified residue" description="N6-acetyllysine" evidence="1">
    <location>
        <position position="109"/>
    </location>
</feature>
<gene>
    <name evidence="9" type="primary">Nat8b-ps</name>
    <name evidence="1" type="synonym">Cml2</name>
</gene>